<proteinExistence type="evidence at protein level"/>
<keyword id="KW-0002">3D-structure</keyword>
<keyword id="KW-1185">Reference proteome</keyword>
<keyword id="KW-0687">Ribonucleoprotein</keyword>
<keyword id="KW-0689">Ribosomal protein</keyword>
<keyword id="KW-0694">RNA-binding</keyword>
<keyword id="KW-0699">rRNA-binding</keyword>
<keyword id="KW-0820">tRNA-binding</keyword>
<accession>P60617</accession>
<accession>Q5UZX7</accession>
<sequence>MSDKPASMYRDIDKPAYTRREYITGIPGSKIAQHKMGRKQKDADDYPVQISLIVEETVQLRHGSLEASRLSANRHLIKELGEEGDYKMTLRKFPHQVLRENKQATGAGADRVSDGMRAAFGKIVGTAARVQAGEQLFTAYCNVEDAEHVKEAFRRAYNKITPSCRIKVERGEELLIA</sequence>
<reference key="1">
    <citation type="journal article" date="2004" name="Genome Res.">
        <title>Genome sequence of Haloarcula marismortui: a halophilic archaeon from the Dead Sea.</title>
        <authorList>
            <person name="Baliga N.S."/>
            <person name="Bonneau R."/>
            <person name="Facciotti M.T."/>
            <person name="Pan M."/>
            <person name="Glusman G."/>
            <person name="Deutsch E.W."/>
            <person name="Shannon P."/>
            <person name="Chiu Y."/>
            <person name="Weng R.S."/>
            <person name="Gan R.R."/>
            <person name="Hung P."/>
            <person name="Date S.V."/>
            <person name="Marcotte E."/>
            <person name="Hood L."/>
            <person name="Ng W.V."/>
        </authorList>
    </citation>
    <scope>NUCLEOTIDE SEQUENCE [LARGE SCALE GENOMIC DNA]</scope>
    <source>
        <strain>ATCC 43049 / DSM 3752 / JCM 8966 / VKM B-1809</strain>
    </source>
</reference>
<reference key="2">
    <citation type="journal article" date="2000" name="Science">
        <title>The complete atomic structure of the large ribosomal subunit at 2.4 A resolution.</title>
        <authorList>
            <person name="Ban N."/>
            <person name="Nissen P."/>
            <person name="Hansen J."/>
            <person name="Moore P.B."/>
            <person name="Steitz T.A."/>
        </authorList>
    </citation>
    <scope>X-RAY CRYSTALLOGRAPHY (2.4 ANGSTROMS) OF THE 50S SUBUNIT</scope>
    <source>
        <strain>ATCC 43049 / DSM 3752 / JCM 8966 / VKM B-1809</strain>
    </source>
</reference>
<reference key="3">
    <citation type="journal article" date="2000" name="Science">
        <title>The structural basis of ribosome activity in peptide bond synthesis.</title>
        <authorList>
            <person name="Nissen P."/>
            <person name="Hansen J."/>
            <person name="Ban N."/>
            <person name="Moore P.B."/>
            <person name="Steitz T.A."/>
        </authorList>
    </citation>
    <scope>X-RAY CRYSTALLOGRAPHY (3.0 ANGSTROMS) OF THE 50S SUBUNIT</scope>
    <source>
        <strain>ATCC 43049 / DSM 3752 / JCM 8966 / VKM B-1809</strain>
    </source>
</reference>
<reference key="4">
    <citation type="journal article" date="2002" name="Nat. Struct. Biol.">
        <title>A pre-translocational intermediate in protein synthesis observed in crystals of enzymatically active 50S subunits.</title>
        <authorList>
            <person name="Schmeing T.M."/>
            <person name="Seila A.C."/>
            <person name="Hansen J.L."/>
            <person name="Freeborn B."/>
            <person name="Soukup J.K."/>
            <person name="Scaringe S.A."/>
            <person name="Strobel S.A."/>
            <person name="Moore P.B."/>
            <person name="Steitz T.A."/>
        </authorList>
    </citation>
    <scope>X-RAY CRYSTALLOGRAPHY (3.1 ANGSTROMS) OF THE 50S SUBUNIT</scope>
    <source>
        <strain>ATCC 43049 / DSM 3752 / JCM 8966 / VKM B-1809</strain>
    </source>
</reference>
<reference key="5">
    <citation type="journal article" date="2001" name="EMBO J.">
        <title>The kink-turn: a new RNA secondary structure motif.</title>
        <authorList>
            <person name="Klein D.J."/>
            <person name="Schmeing T.M."/>
            <person name="Moore P.B."/>
            <person name="Steitz T.A."/>
        </authorList>
    </citation>
    <scope>X-RAY CRYSTALLOGRAPHY (2.4 ANGSTROMS) OF THE 50S SUBUNIT</scope>
    <source>
        <strain>ATCC 43049 / DSM 3752 / JCM 8966 / VKM B-1809</strain>
    </source>
</reference>
<reference key="6">
    <citation type="journal article" date="2002" name="Mol. Cell">
        <title>The structures of four macrolide antibiotics bound to the large ribosomal subunit.</title>
        <authorList>
            <person name="Hansen J.L."/>
            <person name="Ippolito J.A."/>
            <person name="Ban N."/>
            <person name="Nissen P."/>
            <person name="Moore P.B."/>
            <person name="Steitz T.A."/>
        </authorList>
    </citation>
    <scope>X-RAY CRYSTALLOGRAPHY (3.0 ANGSTROMS) OF THE 50S SUBUNIT IN COMPLEX WITH FOUR MACROLIDE ANTIBIOTICS</scope>
    <source>
        <strain>ATCC 43049 / DSM 3752 / JCM 8966 / VKM B-1809</strain>
    </source>
</reference>
<reference key="7">
    <citation type="journal article" date="2002" name="Proc. Natl. Acad. Sci. U.S.A.">
        <title>Structural insights into peptide bond formation.</title>
        <authorList>
            <person name="Hansen J.L."/>
            <person name="Schmeing T.M."/>
            <person name="Moore P.B."/>
            <person name="Steitz T.A."/>
        </authorList>
    </citation>
    <scope>X-RAY CRYSTALLOGRAPHY (2.8 ANGSTROMS) OF THE 50S SUBUNIT</scope>
    <source>
        <strain>ATCC 43049 / DSM 3752 / JCM 8966 / VKM B-1809</strain>
    </source>
</reference>
<reference key="8">
    <citation type="journal article" date="2003" name="J. Mol. Biol.">
        <title>Structures of five antibiotics bound at the peptidyl transferase center of the large ribosomal subunit.</title>
        <authorList>
            <person name="Hansen J.L."/>
            <person name="Moore P.B."/>
            <person name="Steitz T.A."/>
        </authorList>
    </citation>
    <scope>X-RAY CRYSTALLOGRAPHY (3.0 ANGSTROMS) OF THE 50S SUBUNIT IN COMPLEX WITH FIVE ANTIBIOTICS AT THE PEPTIDYL TRANSFERASE CENTER</scope>
    <source>
        <strain>ATCC 43049 / DSM 3752 / JCM 8966 / VKM B-1809</strain>
    </source>
</reference>
<reference key="9">
    <citation type="journal article" date="2003" name="RNA">
        <title>Structures of deacylated tRNA mimics bound to the E site of the large ribosomal subunit.</title>
        <authorList>
            <person name="Schmeing T.M."/>
            <person name="Moore P.B."/>
            <person name="Steitz T.A."/>
        </authorList>
    </citation>
    <scope>X-RAY CRYSTALLOGRAPHY (2.9 ANGSTROMS) OF THE 50S SUBUNIT WITH TWO DIFFERENT E SITE SUBSTRATES</scope>
</reference>
<reference key="10">
    <citation type="journal article" date="2013" name="Acta Crystallogr. D">
        <title>Revisiting the Haloarcula marismortui 50S ribosomal subunit model.</title>
        <authorList>
            <person name="Gabdulkhakov A."/>
            <person name="Nikonov S."/>
            <person name="Garber M."/>
        </authorList>
    </citation>
    <scope>X-RAY CRYSTALLOGRAPHY (2.4 ANGSTROMS) OF THE 50S SUBUNIT</scope>
</reference>
<protein>
    <recommendedName>
        <fullName evidence="1">Large ribosomal subunit protein uL16</fullName>
    </recommendedName>
    <alternativeName>
        <fullName evidence="4">50S ribosomal protein L10e</fullName>
    </alternativeName>
</protein>
<name>RL10E_HALMA</name>
<feature type="chain" id="PRO_0000147132" description="Large ribosomal subunit protein uL16">
    <location>
        <begin position="1"/>
        <end position="177"/>
    </location>
</feature>
<feature type="helix" evidence="7">
    <location>
        <begin position="6"/>
        <end position="8"/>
    </location>
</feature>
<feature type="turn" evidence="7">
    <location>
        <begin position="20"/>
        <end position="22"/>
    </location>
</feature>
<feature type="strand" evidence="8">
    <location>
        <begin position="34"/>
        <end position="37"/>
    </location>
</feature>
<feature type="strand" evidence="6">
    <location>
        <begin position="40"/>
        <end position="42"/>
    </location>
</feature>
<feature type="helix" evidence="8">
    <location>
        <begin position="43"/>
        <end position="45"/>
    </location>
</feature>
<feature type="strand" evidence="7">
    <location>
        <begin position="47"/>
        <end position="56"/>
    </location>
</feature>
<feature type="strand" evidence="7">
    <location>
        <begin position="58"/>
        <end position="61"/>
    </location>
</feature>
<feature type="helix" evidence="7">
    <location>
        <begin position="62"/>
        <end position="80"/>
    </location>
</feature>
<feature type="turn" evidence="9">
    <location>
        <begin position="81"/>
        <end position="83"/>
    </location>
</feature>
<feature type="strand" evidence="7">
    <location>
        <begin position="87"/>
        <end position="90"/>
    </location>
</feature>
<feature type="strand" evidence="7">
    <location>
        <begin position="96"/>
        <end position="100"/>
    </location>
</feature>
<feature type="strand" evidence="5">
    <location>
        <begin position="116"/>
        <end position="118"/>
    </location>
</feature>
<feature type="strand" evidence="7">
    <location>
        <begin position="122"/>
        <end position="130"/>
    </location>
</feature>
<feature type="strand" evidence="7">
    <location>
        <begin position="135"/>
        <end position="141"/>
    </location>
</feature>
<feature type="turn" evidence="7">
    <location>
        <begin position="143"/>
        <end position="145"/>
    </location>
</feature>
<feature type="helix" evidence="7">
    <location>
        <begin position="146"/>
        <end position="156"/>
    </location>
</feature>
<feature type="helix" evidence="7">
    <location>
        <begin position="157"/>
        <end position="159"/>
    </location>
</feature>
<feature type="strand" evidence="7">
    <location>
        <begin position="160"/>
        <end position="162"/>
    </location>
</feature>
<feature type="strand" evidence="7">
    <location>
        <begin position="164"/>
        <end position="166"/>
    </location>
</feature>
<evidence type="ECO:0000255" key="1">
    <source>
        <dbReference type="HAMAP-Rule" id="MF_00448"/>
    </source>
</evidence>
<evidence type="ECO:0000269" key="2">
    <source>
    </source>
</evidence>
<evidence type="ECO:0000269" key="3">
    <source>
    </source>
</evidence>
<evidence type="ECO:0000305" key="4"/>
<evidence type="ECO:0007829" key="5">
    <source>
        <dbReference type="PDB" id="1JJ2"/>
    </source>
</evidence>
<evidence type="ECO:0007829" key="6">
    <source>
        <dbReference type="PDB" id="1Q7Y"/>
    </source>
</evidence>
<evidence type="ECO:0007829" key="7">
    <source>
        <dbReference type="PDB" id="1VQ8"/>
    </source>
</evidence>
<evidence type="ECO:0007829" key="8">
    <source>
        <dbReference type="PDB" id="1VQO"/>
    </source>
</evidence>
<evidence type="ECO:0007829" key="9">
    <source>
        <dbReference type="PDB" id="1YJW"/>
    </source>
</evidence>
<dbReference type="EMBL" id="AY596297">
    <property type="protein sequence ID" value="AAV47175.1"/>
    <property type="molecule type" value="Genomic_DNA"/>
</dbReference>
<dbReference type="RefSeq" id="WP_007189393.1">
    <property type="nucleotide sequence ID" value="NZ_CP039138.1"/>
</dbReference>
<dbReference type="PDB" id="1FFK">
    <property type="method" value="X-ray"/>
    <property type="resolution" value="2.40 A"/>
    <property type="chains" value="F=14-129"/>
</dbReference>
<dbReference type="PDB" id="1JJ2">
    <property type="method" value="X-ray"/>
    <property type="resolution" value="2.40 A"/>
    <property type="chains" value="H=14-130"/>
</dbReference>
<dbReference type="PDB" id="1K73">
    <property type="method" value="X-ray"/>
    <property type="resolution" value="3.01 A"/>
    <property type="chains" value="J=14-130"/>
</dbReference>
<dbReference type="PDB" id="1K8A">
    <property type="method" value="X-ray"/>
    <property type="resolution" value="3.00 A"/>
    <property type="chains" value="J=14-130"/>
</dbReference>
<dbReference type="PDB" id="1K9M">
    <property type="method" value="X-ray"/>
    <property type="resolution" value="3.00 A"/>
    <property type="chains" value="J=14-130"/>
</dbReference>
<dbReference type="PDB" id="1KC8">
    <property type="method" value="X-ray"/>
    <property type="resolution" value="3.01 A"/>
    <property type="chains" value="J=14-130"/>
</dbReference>
<dbReference type="PDB" id="1KD1">
    <property type="method" value="X-ray"/>
    <property type="resolution" value="3.00 A"/>
    <property type="chains" value="J=14-130"/>
</dbReference>
<dbReference type="PDB" id="1KQS">
    <property type="method" value="X-ray"/>
    <property type="resolution" value="3.10 A"/>
    <property type="chains" value="H=14-130"/>
</dbReference>
<dbReference type="PDB" id="1M1K">
    <property type="method" value="X-ray"/>
    <property type="resolution" value="3.20 A"/>
    <property type="chains" value="J=14-130"/>
</dbReference>
<dbReference type="PDB" id="1M90">
    <property type="method" value="X-ray"/>
    <property type="resolution" value="2.80 A"/>
    <property type="chains" value="J=14-130"/>
</dbReference>
<dbReference type="PDB" id="1ML5">
    <property type="method" value="EM"/>
    <property type="resolution" value="14.00 A"/>
    <property type="chains" value="p=18-129"/>
</dbReference>
<dbReference type="PDB" id="1N8R">
    <property type="method" value="X-ray"/>
    <property type="resolution" value="3.00 A"/>
    <property type="chains" value="J=14-130"/>
</dbReference>
<dbReference type="PDB" id="1NJI">
    <property type="method" value="X-ray"/>
    <property type="resolution" value="3.00 A"/>
    <property type="chains" value="J=14-130"/>
</dbReference>
<dbReference type="PDB" id="1Q7Y">
    <property type="method" value="X-ray"/>
    <property type="resolution" value="3.20 A"/>
    <property type="chains" value="J=14-130"/>
</dbReference>
<dbReference type="PDB" id="1Q81">
    <property type="method" value="X-ray"/>
    <property type="resolution" value="2.95 A"/>
    <property type="chains" value="J=14-130"/>
</dbReference>
<dbReference type="PDB" id="1Q82">
    <property type="method" value="X-ray"/>
    <property type="resolution" value="2.98 A"/>
    <property type="chains" value="J=14-130"/>
</dbReference>
<dbReference type="PDB" id="1Q86">
    <property type="method" value="X-ray"/>
    <property type="resolution" value="3.00 A"/>
    <property type="chains" value="J=14-130"/>
</dbReference>
<dbReference type="PDB" id="1QVF">
    <property type="method" value="X-ray"/>
    <property type="resolution" value="3.10 A"/>
    <property type="chains" value="H=14-130"/>
</dbReference>
<dbReference type="PDB" id="1QVG">
    <property type="method" value="X-ray"/>
    <property type="resolution" value="2.90 A"/>
    <property type="chains" value="H=14-130"/>
</dbReference>
<dbReference type="PDB" id="1S72">
    <property type="method" value="X-ray"/>
    <property type="resolution" value="2.40 A"/>
    <property type="chains" value="H=4-166"/>
</dbReference>
<dbReference type="PDB" id="1VQ4">
    <property type="method" value="X-ray"/>
    <property type="resolution" value="2.70 A"/>
    <property type="chains" value="H=4-166"/>
</dbReference>
<dbReference type="PDB" id="1VQ5">
    <property type="method" value="X-ray"/>
    <property type="resolution" value="2.60 A"/>
    <property type="chains" value="H=4-166"/>
</dbReference>
<dbReference type="PDB" id="1VQ6">
    <property type="method" value="X-ray"/>
    <property type="resolution" value="2.70 A"/>
    <property type="chains" value="H=4-166"/>
</dbReference>
<dbReference type="PDB" id="1VQ7">
    <property type="method" value="X-ray"/>
    <property type="resolution" value="2.50 A"/>
    <property type="chains" value="H=4-166"/>
</dbReference>
<dbReference type="PDB" id="1VQ8">
    <property type="method" value="X-ray"/>
    <property type="resolution" value="2.20 A"/>
    <property type="chains" value="H=4-166"/>
</dbReference>
<dbReference type="PDB" id="1VQ9">
    <property type="method" value="X-ray"/>
    <property type="resolution" value="2.40 A"/>
    <property type="chains" value="H=4-166"/>
</dbReference>
<dbReference type="PDB" id="1VQK">
    <property type="method" value="X-ray"/>
    <property type="resolution" value="2.30 A"/>
    <property type="chains" value="H=4-166"/>
</dbReference>
<dbReference type="PDB" id="1VQL">
    <property type="method" value="X-ray"/>
    <property type="resolution" value="2.30 A"/>
    <property type="chains" value="H=4-166"/>
</dbReference>
<dbReference type="PDB" id="1VQM">
    <property type="method" value="X-ray"/>
    <property type="resolution" value="2.30 A"/>
    <property type="chains" value="H=4-166"/>
</dbReference>
<dbReference type="PDB" id="1VQN">
    <property type="method" value="X-ray"/>
    <property type="resolution" value="2.40 A"/>
    <property type="chains" value="H=4-166"/>
</dbReference>
<dbReference type="PDB" id="1VQO">
    <property type="method" value="X-ray"/>
    <property type="resolution" value="2.20 A"/>
    <property type="chains" value="H=4-166"/>
</dbReference>
<dbReference type="PDB" id="1VQP">
    <property type="method" value="X-ray"/>
    <property type="resolution" value="2.25 A"/>
    <property type="chains" value="H=4-166"/>
</dbReference>
<dbReference type="PDB" id="1W2B">
    <property type="method" value="X-ray"/>
    <property type="resolution" value="3.50 A"/>
    <property type="chains" value="H=14-130"/>
</dbReference>
<dbReference type="PDB" id="1YHQ">
    <property type="method" value="X-ray"/>
    <property type="resolution" value="2.40 A"/>
    <property type="chains" value="H=1-177"/>
</dbReference>
<dbReference type="PDB" id="1YI2">
    <property type="method" value="X-ray"/>
    <property type="resolution" value="2.65 A"/>
    <property type="chains" value="H=1-177"/>
</dbReference>
<dbReference type="PDB" id="1YIJ">
    <property type="method" value="X-ray"/>
    <property type="resolution" value="2.60 A"/>
    <property type="chains" value="H=1-177"/>
</dbReference>
<dbReference type="PDB" id="1YIT">
    <property type="method" value="X-ray"/>
    <property type="resolution" value="2.80 A"/>
    <property type="chains" value="H=1-177"/>
</dbReference>
<dbReference type="PDB" id="1YJ9">
    <property type="method" value="X-ray"/>
    <property type="resolution" value="2.90 A"/>
    <property type="chains" value="H=1-177"/>
</dbReference>
<dbReference type="PDB" id="1YJN">
    <property type="method" value="X-ray"/>
    <property type="resolution" value="3.00 A"/>
    <property type="chains" value="H=1-177"/>
</dbReference>
<dbReference type="PDB" id="1YJW">
    <property type="method" value="X-ray"/>
    <property type="resolution" value="2.90 A"/>
    <property type="chains" value="H=1-177"/>
</dbReference>
<dbReference type="PDB" id="2OTJ">
    <property type="method" value="X-ray"/>
    <property type="resolution" value="2.90 A"/>
    <property type="chains" value="H=4-166"/>
</dbReference>
<dbReference type="PDB" id="2OTL">
    <property type="method" value="X-ray"/>
    <property type="resolution" value="2.70 A"/>
    <property type="chains" value="H=4-166"/>
</dbReference>
<dbReference type="PDB" id="2QA4">
    <property type="method" value="X-ray"/>
    <property type="resolution" value="3.00 A"/>
    <property type="chains" value="H=4-177"/>
</dbReference>
<dbReference type="PDB" id="2QEX">
    <property type="method" value="X-ray"/>
    <property type="resolution" value="2.90 A"/>
    <property type="chains" value="H=1-177"/>
</dbReference>
<dbReference type="PDB" id="3CC2">
    <property type="method" value="X-ray"/>
    <property type="resolution" value="2.40 A"/>
    <property type="chains" value="H=1-177"/>
</dbReference>
<dbReference type="PDB" id="3CC4">
    <property type="method" value="X-ray"/>
    <property type="resolution" value="2.70 A"/>
    <property type="chains" value="H=1-177"/>
</dbReference>
<dbReference type="PDB" id="3CC7">
    <property type="method" value="X-ray"/>
    <property type="resolution" value="2.70 A"/>
    <property type="chains" value="H=1-177"/>
</dbReference>
<dbReference type="PDB" id="3CCE">
    <property type="method" value="X-ray"/>
    <property type="resolution" value="2.75 A"/>
    <property type="chains" value="H=1-177"/>
</dbReference>
<dbReference type="PDB" id="3CCJ">
    <property type="method" value="X-ray"/>
    <property type="resolution" value="2.70 A"/>
    <property type="chains" value="H=1-177"/>
</dbReference>
<dbReference type="PDB" id="3CCL">
    <property type="method" value="X-ray"/>
    <property type="resolution" value="2.90 A"/>
    <property type="chains" value="H=1-177"/>
</dbReference>
<dbReference type="PDB" id="3CCM">
    <property type="method" value="X-ray"/>
    <property type="resolution" value="2.55 A"/>
    <property type="chains" value="H=1-177"/>
</dbReference>
<dbReference type="PDB" id="3CCQ">
    <property type="method" value="X-ray"/>
    <property type="resolution" value="2.90 A"/>
    <property type="chains" value="H=1-177"/>
</dbReference>
<dbReference type="PDB" id="3CCR">
    <property type="method" value="X-ray"/>
    <property type="resolution" value="3.00 A"/>
    <property type="chains" value="H=1-177"/>
</dbReference>
<dbReference type="PDB" id="3CCS">
    <property type="method" value="X-ray"/>
    <property type="resolution" value="2.95 A"/>
    <property type="chains" value="H=1-177"/>
</dbReference>
<dbReference type="PDB" id="3CCU">
    <property type="method" value="X-ray"/>
    <property type="resolution" value="2.80 A"/>
    <property type="chains" value="H=1-177"/>
</dbReference>
<dbReference type="PDB" id="3CCV">
    <property type="method" value="X-ray"/>
    <property type="resolution" value="2.90 A"/>
    <property type="chains" value="H=1-177"/>
</dbReference>
<dbReference type="PDB" id="3CD6">
    <property type="method" value="X-ray"/>
    <property type="resolution" value="2.75 A"/>
    <property type="chains" value="H=1-177"/>
</dbReference>
<dbReference type="PDB" id="3CMA">
    <property type="method" value="X-ray"/>
    <property type="resolution" value="2.80 A"/>
    <property type="chains" value="H=1-177"/>
</dbReference>
<dbReference type="PDB" id="3CME">
    <property type="method" value="X-ray"/>
    <property type="resolution" value="2.95 A"/>
    <property type="chains" value="H=1-177"/>
</dbReference>
<dbReference type="PDB" id="3CPW">
    <property type="method" value="X-ray"/>
    <property type="resolution" value="2.70 A"/>
    <property type="chains" value="H=1-177"/>
</dbReference>
<dbReference type="PDB" id="3G4S">
    <property type="method" value="X-ray"/>
    <property type="resolution" value="3.20 A"/>
    <property type="chains" value="H=1-177"/>
</dbReference>
<dbReference type="PDB" id="3G6E">
    <property type="method" value="X-ray"/>
    <property type="resolution" value="2.70 A"/>
    <property type="chains" value="H=1-177"/>
</dbReference>
<dbReference type="PDB" id="3G71">
    <property type="method" value="X-ray"/>
    <property type="resolution" value="2.85 A"/>
    <property type="chains" value="H=1-177"/>
</dbReference>
<dbReference type="PDB" id="3I55">
    <property type="method" value="X-ray"/>
    <property type="resolution" value="3.11 A"/>
    <property type="chains" value="H=1-166"/>
</dbReference>
<dbReference type="PDB" id="3I56">
    <property type="method" value="X-ray"/>
    <property type="resolution" value="2.90 A"/>
    <property type="chains" value="H=1-166"/>
</dbReference>
<dbReference type="PDB" id="4ADX">
    <property type="method" value="EM"/>
    <property type="resolution" value="6.60 A"/>
    <property type="chains" value="H=1-177"/>
</dbReference>
<dbReference type="PDB" id="4V9F">
    <property type="method" value="X-ray"/>
    <property type="resolution" value="2.40 A"/>
    <property type="chains" value="H=1-177"/>
</dbReference>
<dbReference type="PDBsum" id="1FFK"/>
<dbReference type="PDBsum" id="1JJ2"/>
<dbReference type="PDBsum" id="1K73"/>
<dbReference type="PDBsum" id="1K8A"/>
<dbReference type="PDBsum" id="1K9M"/>
<dbReference type="PDBsum" id="1KC8"/>
<dbReference type="PDBsum" id="1KD1"/>
<dbReference type="PDBsum" id="1KQS"/>
<dbReference type="PDBsum" id="1M1K"/>
<dbReference type="PDBsum" id="1M90"/>
<dbReference type="PDBsum" id="1ML5"/>
<dbReference type="PDBsum" id="1N8R"/>
<dbReference type="PDBsum" id="1NJI"/>
<dbReference type="PDBsum" id="1Q7Y"/>
<dbReference type="PDBsum" id="1Q81"/>
<dbReference type="PDBsum" id="1Q82"/>
<dbReference type="PDBsum" id="1Q86"/>
<dbReference type="PDBsum" id="1QVF"/>
<dbReference type="PDBsum" id="1QVG"/>
<dbReference type="PDBsum" id="1S72"/>
<dbReference type="PDBsum" id="1VQ4"/>
<dbReference type="PDBsum" id="1VQ5"/>
<dbReference type="PDBsum" id="1VQ6"/>
<dbReference type="PDBsum" id="1VQ7"/>
<dbReference type="PDBsum" id="1VQ8"/>
<dbReference type="PDBsum" id="1VQ9"/>
<dbReference type="PDBsum" id="1VQK"/>
<dbReference type="PDBsum" id="1VQL"/>
<dbReference type="PDBsum" id="1VQM"/>
<dbReference type="PDBsum" id="1VQN"/>
<dbReference type="PDBsum" id="1VQO"/>
<dbReference type="PDBsum" id="1VQP"/>
<dbReference type="PDBsum" id="1W2B"/>
<dbReference type="PDBsum" id="1YHQ"/>
<dbReference type="PDBsum" id="1YI2"/>
<dbReference type="PDBsum" id="1YIJ"/>
<dbReference type="PDBsum" id="1YIT"/>
<dbReference type="PDBsum" id="1YJ9"/>
<dbReference type="PDBsum" id="1YJN"/>
<dbReference type="PDBsum" id="1YJW"/>
<dbReference type="PDBsum" id="2OTJ"/>
<dbReference type="PDBsum" id="2OTL"/>
<dbReference type="PDBsum" id="2QA4"/>
<dbReference type="PDBsum" id="2QEX"/>
<dbReference type="PDBsum" id="3CC2"/>
<dbReference type="PDBsum" id="3CC4"/>
<dbReference type="PDBsum" id="3CC7"/>
<dbReference type="PDBsum" id="3CCE"/>
<dbReference type="PDBsum" id="3CCJ"/>
<dbReference type="PDBsum" id="3CCL"/>
<dbReference type="PDBsum" id="3CCM"/>
<dbReference type="PDBsum" id="3CCQ"/>
<dbReference type="PDBsum" id="3CCR"/>
<dbReference type="PDBsum" id="3CCS"/>
<dbReference type="PDBsum" id="3CCU"/>
<dbReference type="PDBsum" id="3CCV"/>
<dbReference type="PDBsum" id="3CD6"/>
<dbReference type="PDBsum" id="3CMA"/>
<dbReference type="PDBsum" id="3CME"/>
<dbReference type="PDBsum" id="3CPW"/>
<dbReference type="PDBsum" id="3G4S"/>
<dbReference type="PDBsum" id="3G6E"/>
<dbReference type="PDBsum" id="3G71"/>
<dbReference type="PDBsum" id="3I55"/>
<dbReference type="PDBsum" id="3I56"/>
<dbReference type="PDBsum" id="4ADX"/>
<dbReference type="PDBsum" id="4V9F"/>
<dbReference type="SMR" id="P60617"/>
<dbReference type="IntAct" id="P60617">
    <property type="interactions" value="27"/>
</dbReference>
<dbReference type="STRING" id="272569.rrnAC2357"/>
<dbReference type="PaxDb" id="272569-rrnAC2357"/>
<dbReference type="EnsemblBacteria" id="AAV47175">
    <property type="protein sequence ID" value="AAV47175"/>
    <property type="gene ID" value="rrnAC2357"/>
</dbReference>
<dbReference type="KEGG" id="hma:rrnAC2357"/>
<dbReference type="PATRIC" id="fig|272569.17.peg.2976"/>
<dbReference type="eggNOG" id="arCOG04113">
    <property type="taxonomic scope" value="Archaea"/>
</dbReference>
<dbReference type="HOGENOM" id="CLU_084051_0_2_2"/>
<dbReference type="EvolutionaryTrace" id="P60617"/>
<dbReference type="Proteomes" id="UP000001169">
    <property type="component" value="Chromosome I"/>
</dbReference>
<dbReference type="GO" id="GO:1990904">
    <property type="term" value="C:ribonucleoprotein complex"/>
    <property type="evidence" value="ECO:0007669"/>
    <property type="project" value="UniProtKB-KW"/>
</dbReference>
<dbReference type="GO" id="GO:0005840">
    <property type="term" value="C:ribosome"/>
    <property type="evidence" value="ECO:0007669"/>
    <property type="project" value="UniProtKB-KW"/>
</dbReference>
<dbReference type="GO" id="GO:0019843">
    <property type="term" value="F:rRNA binding"/>
    <property type="evidence" value="ECO:0007669"/>
    <property type="project" value="UniProtKB-KW"/>
</dbReference>
<dbReference type="GO" id="GO:0003735">
    <property type="term" value="F:structural constituent of ribosome"/>
    <property type="evidence" value="ECO:0007669"/>
    <property type="project" value="InterPro"/>
</dbReference>
<dbReference type="GO" id="GO:0000049">
    <property type="term" value="F:tRNA binding"/>
    <property type="evidence" value="ECO:0007669"/>
    <property type="project" value="UniProtKB-KW"/>
</dbReference>
<dbReference type="GO" id="GO:0006412">
    <property type="term" value="P:translation"/>
    <property type="evidence" value="ECO:0007669"/>
    <property type="project" value="UniProtKB-UniRule"/>
</dbReference>
<dbReference type="CDD" id="cd01433">
    <property type="entry name" value="Ribosomal_L16_L10e"/>
    <property type="match status" value="1"/>
</dbReference>
<dbReference type="Gene3D" id="3.90.1170.10">
    <property type="entry name" value="Ribosomal protein L10e/L16"/>
    <property type="match status" value="1"/>
</dbReference>
<dbReference type="HAMAP" id="MF_00448">
    <property type="entry name" value="Ribosomal_uL16_arch"/>
    <property type="match status" value="1"/>
</dbReference>
<dbReference type="InterPro" id="IPR047873">
    <property type="entry name" value="Ribosomal_uL16"/>
</dbReference>
<dbReference type="InterPro" id="IPR022981">
    <property type="entry name" value="Ribosomal_uL16_arc"/>
</dbReference>
<dbReference type="InterPro" id="IPR018255">
    <property type="entry name" value="Ribosomal_uL16_CS_euk_arc"/>
</dbReference>
<dbReference type="InterPro" id="IPR016180">
    <property type="entry name" value="Ribosomal_uL16_dom"/>
</dbReference>
<dbReference type="InterPro" id="IPR001197">
    <property type="entry name" value="Ribosomal_uL16_euk_arch"/>
</dbReference>
<dbReference type="InterPro" id="IPR036920">
    <property type="entry name" value="Ribosomal_uL16_sf"/>
</dbReference>
<dbReference type="NCBIfam" id="NF003239">
    <property type="entry name" value="PRK04199.1-4"/>
    <property type="match status" value="1"/>
</dbReference>
<dbReference type="NCBIfam" id="NF003241">
    <property type="entry name" value="PRK04199.1-6"/>
    <property type="match status" value="1"/>
</dbReference>
<dbReference type="PANTHER" id="PTHR11726">
    <property type="entry name" value="60S RIBOSOMAL PROTEIN L10"/>
    <property type="match status" value="1"/>
</dbReference>
<dbReference type="Pfam" id="PF00252">
    <property type="entry name" value="Ribosomal_L16"/>
    <property type="match status" value="1"/>
</dbReference>
<dbReference type="PIRSF" id="PIRSF005590">
    <property type="entry name" value="Ribosomal_L10"/>
    <property type="match status" value="1"/>
</dbReference>
<dbReference type="SUPFAM" id="SSF54686">
    <property type="entry name" value="Ribosomal protein L16p/L10e"/>
    <property type="match status" value="1"/>
</dbReference>
<dbReference type="PROSITE" id="PS01257">
    <property type="entry name" value="RIBOSOMAL_L10E"/>
    <property type="match status" value="1"/>
</dbReference>
<gene>
    <name evidence="1" type="primary">rpl10e</name>
    <name type="ordered locus">rrnAC2357</name>
</gene>
<comment type="function">
    <text>This is 1 of 5 proteins that mediate the attachment of the 5S rRNA onto the large ribosomal subunit, stabilizing the orientation of adjacent RNA domains. Modeling places the A and P site tRNAs in close proximity to this protein.</text>
</comment>
<comment type="subunit">
    <text evidence="2 3">Part of the 50S ribosomal subunit. Weakly binds 5S rRNA. Probably binds the A and P site tRNAs.</text>
</comment>
<comment type="similarity">
    <text evidence="1">Belongs to the universal ribosomal protein uL16 family.</text>
</comment>
<organism>
    <name type="scientific">Haloarcula marismortui (strain ATCC 43049 / DSM 3752 / JCM 8966 / VKM B-1809)</name>
    <name type="common">Halobacterium marismortui</name>
    <dbReference type="NCBI Taxonomy" id="272569"/>
    <lineage>
        <taxon>Archaea</taxon>
        <taxon>Methanobacteriati</taxon>
        <taxon>Methanobacteriota</taxon>
        <taxon>Stenosarchaea group</taxon>
        <taxon>Halobacteria</taxon>
        <taxon>Halobacteriales</taxon>
        <taxon>Haloarculaceae</taxon>
        <taxon>Haloarcula</taxon>
    </lineage>
</organism>